<accession>P07348</accession>
<feature type="signal peptide">
    <location>
        <begin position="1"/>
        <end position="23"/>
    </location>
</feature>
<feature type="chain" id="PRO_0000016384" description="Interferon alpha-1">
    <location>
        <begin position="24"/>
        <end position="189"/>
    </location>
</feature>
<feature type="disulfide bond" evidence="1">
    <location>
        <begin position="24"/>
        <end position="122"/>
    </location>
</feature>
<feature type="disulfide bond" evidence="1">
    <location>
        <begin position="52"/>
        <end position="162"/>
    </location>
</feature>
<keyword id="KW-0051">Antiviral defense</keyword>
<keyword id="KW-0202">Cytokine</keyword>
<keyword id="KW-1015">Disulfide bond</keyword>
<keyword id="KW-1185">Reference proteome</keyword>
<keyword id="KW-0964">Secreted</keyword>
<keyword id="KW-0732">Signal</keyword>
<proteinExistence type="inferred from homology"/>
<name>IFNA1_BOVIN</name>
<reference key="1">
    <citation type="journal article" date="1985" name="Mol. Cell. Biol.">
        <title>Two distinct families of human and bovine interferon-alpha genes are coordinately expressed and encode functional polypeptides.</title>
        <authorList>
            <person name="Capon D.J."/>
            <person name="Shepard H.M."/>
            <person name="Goeddel D.V."/>
        </authorList>
    </citation>
    <scope>NUCLEOTIDE SEQUENCE [GENOMIC DNA]</scope>
    <source>
        <tissue>Pancreas</tissue>
    </source>
</reference>
<comment type="function">
    <text>Produced by macrophages, IFN-alpha have antiviral activities. Interferon stimulates the production of two enzymes: a protein kinase and an oligoadenylate synthetase.</text>
</comment>
<comment type="subunit">
    <text evidence="2">Interacts with CR2.</text>
</comment>
<comment type="subcellular location">
    <subcellularLocation>
        <location>Secreted</location>
    </subcellularLocation>
</comment>
<comment type="similarity">
    <text evidence="3">Belongs to the alpha/beta interferon family.</text>
</comment>
<protein>
    <recommendedName>
        <fullName>Interferon alpha-1</fullName>
    </recommendedName>
</protein>
<dbReference type="EMBL" id="M11001">
    <property type="protein sequence ID" value="AAA30577.1"/>
    <property type="molecule type" value="Genomic_DNA"/>
</dbReference>
<dbReference type="PIR" id="A23285">
    <property type="entry name" value="IVBOI1"/>
</dbReference>
<dbReference type="SMR" id="P07348"/>
<dbReference type="FunCoup" id="P07348">
    <property type="interactions" value="29"/>
</dbReference>
<dbReference type="PaxDb" id="9913-ENSBTAP00000055837"/>
<dbReference type="eggNOG" id="ENOG502SQAC">
    <property type="taxonomic scope" value="Eukaryota"/>
</dbReference>
<dbReference type="InParanoid" id="P07348"/>
<dbReference type="Proteomes" id="UP000009136">
    <property type="component" value="Unplaced"/>
</dbReference>
<dbReference type="GO" id="GO:0005615">
    <property type="term" value="C:extracellular space"/>
    <property type="evidence" value="ECO:0000318"/>
    <property type="project" value="GO_Central"/>
</dbReference>
<dbReference type="GO" id="GO:0005125">
    <property type="term" value="F:cytokine activity"/>
    <property type="evidence" value="ECO:0000318"/>
    <property type="project" value="GO_Central"/>
</dbReference>
<dbReference type="GO" id="GO:0005132">
    <property type="term" value="F:type I interferon receptor binding"/>
    <property type="evidence" value="ECO:0000318"/>
    <property type="project" value="GO_Central"/>
</dbReference>
<dbReference type="GO" id="GO:0002250">
    <property type="term" value="P:adaptive immune response"/>
    <property type="evidence" value="ECO:0000318"/>
    <property type="project" value="GO_Central"/>
</dbReference>
<dbReference type="GO" id="GO:0002312">
    <property type="term" value="P:B cell activation involved in immune response"/>
    <property type="evidence" value="ECO:0000318"/>
    <property type="project" value="GO_Central"/>
</dbReference>
<dbReference type="GO" id="GO:0051607">
    <property type="term" value="P:defense response to virus"/>
    <property type="evidence" value="ECO:0007669"/>
    <property type="project" value="UniProtKB-KW"/>
</dbReference>
<dbReference type="GO" id="GO:0006959">
    <property type="term" value="P:humoral immune response"/>
    <property type="evidence" value="ECO:0000318"/>
    <property type="project" value="GO_Central"/>
</dbReference>
<dbReference type="GO" id="GO:0002323">
    <property type="term" value="P:natural killer cell activation involved in immune response"/>
    <property type="evidence" value="ECO:0000318"/>
    <property type="project" value="GO_Central"/>
</dbReference>
<dbReference type="GO" id="GO:0009891">
    <property type="term" value="P:positive regulation of biosynthetic process"/>
    <property type="evidence" value="ECO:0007669"/>
    <property type="project" value="UniProtKB-ARBA"/>
</dbReference>
<dbReference type="GO" id="GO:0043330">
    <property type="term" value="P:response to exogenous dsRNA"/>
    <property type="evidence" value="ECO:0000318"/>
    <property type="project" value="GO_Central"/>
</dbReference>
<dbReference type="GO" id="GO:0002286">
    <property type="term" value="P:T cell activation involved in immune response"/>
    <property type="evidence" value="ECO:0000318"/>
    <property type="project" value="GO_Central"/>
</dbReference>
<dbReference type="GO" id="GO:0060337">
    <property type="term" value="P:type I interferon-mediated signaling pathway"/>
    <property type="evidence" value="ECO:0000318"/>
    <property type="project" value="GO_Central"/>
</dbReference>
<dbReference type="CDD" id="cd00095">
    <property type="entry name" value="IFab"/>
    <property type="match status" value="1"/>
</dbReference>
<dbReference type="FunFam" id="1.20.1250.10:FF:000001">
    <property type="entry name" value="Interferon alpha"/>
    <property type="match status" value="1"/>
</dbReference>
<dbReference type="Gene3D" id="1.20.1250.10">
    <property type="match status" value="1"/>
</dbReference>
<dbReference type="InterPro" id="IPR009079">
    <property type="entry name" value="4_helix_cytokine-like_core"/>
</dbReference>
<dbReference type="InterPro" id="IPR000471">
    <property type="entry name" value="Interferon_alpha/beta/delta"/>
</dbReference>
<dbReference type="PANTHER" id="PTHR11691:SF60">
    <property type="entry name" value="INTERFERON ALPHA-5"/>
    <property type="match status" value="1"/>
</dbReference>
<dbReference type="PANTHER" id="PTHR11691">
    <property type="entry name" value="TYPE I INTERFERON"/>
    <property type="match status" value="1"/>
</dbReference>
<dbReference type="Pfam" id="PF00143">
    <property type="entry name" value="Interferon"/>
    <property type="match status" value="1"/>
</dbReference>
<dbReference type="PRINTS" id="PR00266">
    <property type="entry name" value="INTERFERONAB"/>
</dbReference>
<dbReference type="SMART" id="SM00076">
    <property type="entry name" value="IFabd"/>
    <property type="match status" value="1"/>
</dbReference>
<dbReference type="SUPFAM" id="SSF47266">
    <property type="entry name" value="4-helical cytokines"/>
    <property type="match status" value="1"/>
</dbReference>
<dbReference type="PROSITE" id="PS00252">
    <property type="entry name" value="INTERFERON_A_B_D"/>
    <property type="match status" value="1"/>
</dbReference>
<evidence type="ECO:0000250" key="1"/>
<evidence type="ECO:0000250" key="2">
    <source>
        <dbReference type="UniProtKB" id="P01562"/>
    </source>
</evidence>
<evidence type="ECO:0000305" key="3"/>
<organism>
    <name type="scientific">Bos taurus</name>
    <name type="common">Bovine</name>
    <dbReference type="NCBI Taxonomy" id="9913"/>
    <lineage>
        <taxon>Eukaryota</taxon>
        <taxon>Metazoa</taxon>
        <taxon>Chordata</taxon>
        <taxon>Craniata</taxon>
        <taxon>Vertebrata</taxon>
        <taxon>Euteleostomi</taxon>
        <taxon>Mammalia</taxon>
        <taxon>Eutheria</taxon>
        <taxon>Laurasiatheria</taxon>
        <taxon>Artiodactyla</taxon>
        <taxon>Ruminantia</taxon>
        <taxon>Pecora</taxon>
        <taxon>Bovidae</taxon>
        <taxon>Bovinae</taxon>
        <taxon>Bos</taxon>
    </lineage>
</organism>
<sequence length="189" mass="21406">MAPAWSLLLALLLLSCNAICSLGCHLPHSHSLAKRRVLTLLRQLRRVSPSSCLQDRNDFAFPQEALGGSQLQKAQAISVLHEVTQHTFQLFSTEGSAAVWDESLLDRLRTALDQQLTDLQACLRQEEGLPGAPLLKEDSSLAVRKYFHRLTLYLQEKRHSPCAWEVVRAQVMRAFSSSTNLQERFRRKD</sequence>